<accession>P83713</accession>
<feature type="chain" id="PRO_0000200740" description="Flavoprotein WrbA 1">
    <location>
        <begin position="1"/>
        <end position="13" status="greater than"/>
    </location>
</feature>
<feature type="non-terminal residue" evidence="3">
    <location>
        <position position="13"/>
    </location>
</feature>
<protein>
    <recommendedName>
        <fullName>Flavoprotein WrbA 1</fullName>
    </recommendedName>
</protein>
<proteinExistence type="evidence at protein level"/>
<name>WRBA1_ACICA</name>
<comment type="cofactor">
    <cofactor evidence="1">
        <name>FMN</name>
        <dbReference type="ChEBI" id="CHEBI:58210"/>
    </cofactor>
    <text evidence="1">Binds 1 FMN per monomer.</text>
</comment>
<comment type="induction">
    <text evidence="2">By phenol.</text>
</comment>
<comment type="similarity">
    <text evidence="3">Belongs to the WrbA family.</text>
</comment>
<keyword id="KW-0903">Direct protein sequencing</keyword>
<keyword id="KW-0285">Flavoprotein</keyword>
<keyword id="KW-0288">FMN</keyword>
<evidence type="ECO:0000250" key="1">
    <source>
        <dbReference type="UniProtKB" id="Q92PU3"/>
    </source>
</evidence>
<evidence type="ECO:0000269" key="2">
    <source ref="1"/>
</evidence>
<evidence type="ECO:0000305" key="3"/>
<organism evidence="3">
    <name type="scientific">Acinetobacter calcoaceticus</name>
    <dbReference type="NCBI Taxonomy" id="471"/>
    <lineage>
        <taxon>Bacteria</taxon>
        <taxon>Pseudomonadati</taxon>
        <taxon>Pseudomonadota</taxon>
        <taxon>Gammaproteobacteria</taxon>
        <taxon>Moraxellales</taxon>
        <taxon>Moraxellaceae</taxon>
        <taxon>Acinetobacter</taxon>
        <taxon>Acinetobacter calcoaceticus/baumannii complex</taxon>
    </lineage>
</organism>
<sequence>QNARIAVVYFAGY</sequence>
<reference evidence="3" key="1">
    <citation type="journal article" date="2004" name="Eng. Life Sci.">
        <title>Growth on phenol at chemostress levels amplifies the expression of the phenol degradation pathway in Acinetobacter calcoaceticus.</title>
        <authorList>
            <person name="Benndorf D."/>
            <person name="Loffhagen N."/>
            <person name="Hartig C."/>
            <person name="Babel W."/>
        </authorList>
    </citation>
    <scope>PROTEIN SEQUENCE</scope>
    <scope>INDUCTION</scope>
    <source>
        <strain>69-V</strain>
    </source>
</reference>